<protein>
    <recommendedName>
        <fullName>Signal transduction protein TRAP</fullName>
    </recommendedName>
    <alternativeName>
        <fullName>Target of RNAIII-activating protein</fullName>
    </alternativeName>
</protein>
<accession>Q2G2F3</accession>
<accession>Q9F949</accession>
<comment type="function">
    <text evidence="1 3">Signal transduction protein, which is a major regulator of staphylococcal pathogenesis. Phosphorylated TRAP leads to the activation of agr system and consequent RNAIII synthesis resulting in the expression of several virulence factors. Up-regulates the expression of most toxins and genes known to be necessary for biofilm formation.</text>
</comment>
<comment type="subcellular location">
    <subcellularLocation>
        <location evidence="2">Membrane</location>
    </subcellularLocation>
    <text>Membrane-associated.</text>
</comment>
<comment type="induction">
    <text evidence="1">Constitutively expressed.</text>
</comment>
<comment type="PTM">
    <text>Each of the three conserved histidine residues contributes to TRAP phosphorylation. Phosphorylation is essential for TRAP activity.</text>
</comment>
<comment type="PTM">
    <text>Phosphorylation of TRAP is activated by RAP and necessary for the induction of RNAIII gene expression but not for ongoing transcription. TRAP is dephosphorylated from the mid-exponential phase of growth, which is when agr is activated and AIP is produced. RIP acts by inhibiting TRAP phosphorylation.</text>
</comment>
<comment type="similarity">
    <text evidence="4">Belongs to the TRAP family.</text>
</comment>
<dbReference type="EMBL" id="AF202641">
    <property type="protein sequence ID" value="AAG32925.1"/>
    <property type="molecule type" value="Genomic_DNA"/>
</dbReference>
<dbReference type="EMBL" id="AJ489450">
    <property type="protein sequence ID" value="CAD33705.1"/>
    <property type="molecule type" value="Genomic_DNA"/>
</dbReference>
<dbReference type="EMBL" id="CP000253">
    <property type="protein sequence ID" value="ABD31025.1"/>
    <property type="molecule type" value="Genomic_DNA"/>
</dbReference>
<dbReference type="RefSeq" id="WP_000737976.1">
    <property type="nucleotide sequence ID" value="NZ_LS483365.1"/>
</dbReference>
<dbReference type="RefSeq" id="YP_500463.1">
    <property type="nucleotide sequence ID" value="NC_007795.1"/>
</dbReference>
<dbReference type="PDB" id="4AE5">
    <property type="method" value="X-ray"/>
    <property type="resolution" value="1.85 A"/>
    <property type="chains" value="A/B/C/D=1-167"/>
</dbReference>
<dbReference type="PDBsum" id="4AE5"/>
<dbReference type="SMR" id="Q2G2F3"/>
<dbReference type="STRING" id="93061.SAOUHSC_01964"/>
<dbReference type="iPTMnet" id="Q2G2F3"/>
<dbReference type="PaxDb" id="1280-SAXN108_1864"/>
<dbReference type="GeneID" id="3920909"/>
<dbReference type="KEGG" id="sao:SAOUHSC_01964"/>
<dbReference type="PATRIC" id="fig|93061.5.peg.1788"/>
<dbReference type="eggNOG" id="COG2329">
    <property type="taxonomic scope" value="Bacteria"/>
</dbReference>
<dbReference type="HOGENOM" id="CLU_116220_0_0_9"/>
<dbReference type="OrthoDB" id="2352283at2"/>
<dbReference type="EvolutionaryTrace" id="Q2G2F3"/>
<dbReference type="PRO" id="PR:Q2G2F3"/>
<dbReference type="Proteomes" id="UP000008816">
    <property type="component" value="Chromosome"/>
</dbReference>
<dbReference type="GO" id="GO:0016020">
    <property type="term" value="C:membrane"/>
    <property type="evidence" value="ECO:0007669"/>
    <property type="project" value="UniProtKB-SubCell"/>
</dbReference>
<dbReference type="GO" id="GO:0004392">
    <property type="term" value="F:heme oxygenase (decyclizing) activity"/>
    <property type="evidence" value="ECO:0000318"/>
    <property type="project" value="GO_Central"/>
</dbReference>
<dbReference type="GO" id="GO:0042167">
    <property type="term" value="P:heme catabolic process"/>
    <property type="evidence" value="ECO:0000318"/>
    <property type="project" value="GO_Central"/>
</dbReference>
<dbReference type="Gene3D" id="3.30.70.100">
    <property type="match status" value="1"/>
</dbReference>
<dbReference type="InterPro" id="IPR007138">
    <property type="entry name" value="ABM_dom"/>
</dbReference>
<dbReference type="InterPro" id="IPR011008">
    <property type="entry name" value="Dimeric_a/b-barrel"/>
</dbReference>
<dbReference type="InterPro" id="IPR050404">
    <property type="entry name" value="Heme-degrading_MO"/>
</dbReference>
<dbReference type="PANTHER" id="PTHR34474">
    <property type="entry name" value="SIGNAL TRANSDUCTION PROTEIN TRAP"/>
    <property type="match status" value="1"/>
</dbReference>
<dbReference type="PANTHER" id="PTHR34474:SF2">
    <property type="entry name" value="SIGNAL TRANSDUCTION PROTEIN TRAP"/>
    <property type="match status" value="1"/>
</dbReference>
<dbReference type="SUPFAM" id="SSF54909">
    <property type="entry name" value="Dimeric alpha+beta barrel"/>
    <property type="match status" value="1"/>
</dbReference>
<dbReference type="PROSITE" id="PS51725">
    <property type="entry name" value="ABM"/>
    <property type="match status" value="1"/>
</dbReference>
<feature type="chain" id="PRO_0000289343" description="Signal transduction protein TRAP">
    <location>
        <begin position="1"/>
        <end position="167"/>
    </location>
</feature>
<feature type="domain" description="ABM">
    <location>
        <begin position="67"/>
        <end position="158"/>
    </location>
</feature>
<feature type="modified residue" description="Phosphohistidine" evidence="2">
    <location>
        <position position="66"/>
    </location>
</feature>
<feature type="modified residue" description="Phosphohistidine" evidence="2">
    <location>
        <position position="79"/>
    </location>
</feature>
<feature type="modified residue" description="Phosphohistidine" evidence="2">
    <location>
        <position position="154"/>
    </location>
</feature>
<feature type="mutagenesis site" description="Abolishes induction of RNAIII synthesis and toxin production. Reduces phosphorylation." evidence="2">
    <original>H</original>
    <variation>A</variation>
    <location>
        <position position="66"/>
    </location>
</feature>
<feature type="mutagenesis site" description="Abolishes induction of RNAIII synthesis and toxin production. Reduces phosphorylation." evidence="2">
    <original>H</original>
    <variation>A</variation>
    <location>
        <position position="79"/>
    </location>
</feature>
<feature type="mutagenesis site" description="No effect in induction of RNAIII synthesis and toxin production." evidence="2">
    <original>H</original>
    <variation>A</variation>
    <location>
        <position position="124"/>
    </location>
</feature>
<feature type="mutagenesis site" description="Abolishes induction of RNAIII synthesis and toxin production. Reduces phosphorylation." evidence="2">
    <original>H</original>
    <variation>A</variation>
    <location>
        <position position="154"/>
    </location>
</feature>
<feature type="strand" evidence="5">
    <location>
        <begin position="3"/>
        <end position="9"/>
    </location>
</feature>
<feature type="helix" evidence="5">
    <location>
        <begin position="11"/>
        <end position="20"/>
    </location>
</feature>
<feature type="strand" evidence="5">
    <location>
        <begin position="27"/>
        <end position="30"/>
    </location>
</feature>
<feature type="strand" evidence="5">
    <location>
        <begin position="32"/>
        <end position="43"/>
    </location>
</feature>
<feature type="strand" evidence="5">
    <location>
        <begin position="51"/>
        <end position="60"/>
    </location>
</feature>
<feature type="strand" evidence="5">
    <location>
        <begin position="66"/>
        <end position="73"/>
    </location>
</feature>
<feature type="turn" evidence="5">
    <location>
        <begin position="77"/>
        <end position="79"/>
    </location>
</feature>
<feature type="helix" evidence="5">
    <location>
        <begin position="80"/>
        <end position="88"/>
    </location>
</feature>
<feature type="helix" evidence="5">
    <location>
        <begin position="92"/>
        <end position="96"/>
    </location>
</feature>
<feature type="strand" evidence="5">
    <location>
        <begin position="100"/>
        <end position="112"/>
    </location>
</feature>
<feature type="strand" evidence="5">
    <location>
        <begin position="114"/>
        <end position="122"/>
    </location>
</feature>
<feature type="helix" evidence="5">
    <location>
        <begin position="123"/>
        <end position="131"/>
    </location>
</feature>
<feature type="helix" evidence="5">
    <location>
        <begin position="133"/>
        <end position="136"/>
    </location>
</feature>
<feature type="helix" evidence="5">
    <location>
        <begin position="141"/>
        <end position="144"/>
    </location>
</feature>
<feature type="helix" evidence="5">
    <location>
        <begin position="145"/>
        <end position="147"/>
    </location>
</feature>
<feature type="strand" evidence="5">
    <location>
        <begin position="158"/>
        <end position="164"/>
    </location>
</feature>
<evidence type="ECO:0000269" key="1">
    <source>
    </source>
</evidence>
<evidence type="ECO:0000269" key="2">
    <source>
    </source>
</evidence>
<evidence type="ECO:0000269" key="3">
    <source>
    </source>
</evidence>
<evidence type="ECO:0000305" key="4"/>
<evidence type="ECO:0007829" key="5">
    <source>
        <dbReference type="PDB" id="4AE5"/>
    </source>
</evidence>
<name>TRAP_STAA8</name>
<proteinExistence type="evidence at protein level"/>
<organism>
    <name type="scientific">Staphylococcus aureus (strain NCTC 8325 / PS 47)</name>
    <dbReference type="NCBI Taxonomy" id="93061"/>
    <lineage>
        <taxon>Bacteria</taxon>
        <taxon>Bacillati</taxon>
        <taxon>Bacillota</taxon>
        <taxon>Bacilli</taxon>
        <taxon>Bacillales</taxon>
        <taxon>Staphylococcaceae</taxon>
        <taxon>Staphylococcus</taxon>
    </lineage>
</organism>
<keyword id="KW-0002">3D-structure</keyword>
<keyword id="KW-0472">Membrane</keyword>
<keyword id="KW-0597">Phosphoprotein</keyword>
<keyword id="KW-1185">Reference proteome</keyword>
<keyword id="KW-0843">Virulence</keyword>
<gene>
    <name type="primary">traP</name>
    <name type="ordered locus">SAOUHSC_01964</name>
</gene>
<sequence length="167" mass="19548">MKKLYTSYGTYGFLHQIKINNPTHQLFQFSASDTSVIFEETDGETVLKSPSIYEVIKEIGEFSEHHFYCAIFIPSTEDHAYQLEKKLISVDDNFRNFGGFKSYRLLRPAKGTTYKIYFGFADRHAYEDFKQSDAFNDHFSKDALSHYFGSSGQHSSYFERYLYPIKE</sequence>
<reference key="1">
    <citation type="journal article" date="2001" name="J. Biol. Chem.">
        <title>Regulation of Staphylococcus aureus pathogenesis via target of RNAIII-activating protein (TRAP).</title>
        <authorList>
            <person name="Balaban N."/>
            <person name="Goldkorn T."/>
            <person name="Gov Y."/>
            <person name="Hirshberg M."/>
            <person name="Koyfman N."/>
            <person name="Matthews H.R."/>
            <person name="Nhan R.T."/>
            <person name="Singh B."/>
            <person name="Uziel O."/>
        </authorList>
    </citation>
    <scope>NUCLEOTIDE SEQUENCE [GENOMIC DNA]</scope>
    <scope>PHOSPHORYLATION</scope>
    <scope>FUNCTION</scope>
    <scope>INDUCTION</scope>
</reference>
<reference key="2">
    <citation type="journal article" date="2004" name="J. Biol. Chem.">
        <title>Quorum sensing in Staphylococci is regulated via phosphorylation of three conserved histidine residues.</title>
        <authorList>
            <person name="Gov Y."/>
            <person name="Borovok I."/>
            <person name="Korem M."/>
            <person name="Singh V.K."/>
            <person name="Jayaswal R.K."/>
            <person name="Wilkinson B.J."/>
            <person name="Rich S.M."/>
            <person name="Balaban N."/>
        </authorList>
    </citation>
    <scope>NUCLEOTIDE SEQUENCE [GENOMIC DNA]</scope>
    <scope>PHOSPHORYLATION AT HIS-66; HIS-79 AND HIS-154</scope>
    <scope>SUBCELLULAR LOCATION</scope>
    <scope>MUTAGENESIS OF HIS-66; HIS-79; HIS-124 AND HIS-154</scope>
</reference>
<reference key="3">
    <citation type="book" date="2006" name="Gram positive pathogens, 2nd edition">
        <title>The Staphylococcus aureus NCTC 8325 genome.</title>
        <editorList>
            <person name="Fischetti V."/>
            <person name="Novick R."/>
            <person name="Ferretti J."/>
            <person name="Portnoy D."/>
            <person name="Rood J."/>
        </editorList>
        <authorList>
            <person name="Gillaspy A.F."/>
            <person name="Worrell V."/>
            <person name="Orvis J."/>
            <person name="Roe B.A."/>
            <person name="Dyer D.W."/>
            <person name="Iandolo J.J."/>
        </authorList>
    </citation>
    <scope>NUCLEOTIDE SEQUENCE [LARGE SCALE GENOMIC DNA]</scope>
    <source>
        <strain>NCTC 8325 / PS 47</strain>
    </source>
</reference>
<reference key="4">
    <citation type="journal article" date="2005" name="Infect. Immun.">
        <title>Transcriptional profiling of target of RNAIII-activating protein, a master regulator of staphylococcal virulence.</title>
        <authorList>
            <person name="Korem M."/>
            <person name="Gov Y."/>
            <person name="Kiran M.D."/>
            <person name="Balaban N."/>
        </authorList>
    </citation>
    <scope>FUNCTION AS A REGULATOR OF VIRULENCE FACTORS</scope>
</reference>